<comment type="function">
    <text evidence="1">Involved in the third step of the chorismate pathway, which leads to the biosynthesis of aromatic amino acids. Catalyzes the cis-dehydration of 3-dehydroquinate (DHQ) and introduces the first double bond of the aromatic ring to yield 3-dehydroshikimate.</text>
</comment>
<comment type="catalytic activity">
    <reaction evidence="1">
        <text>3-dehydroquinate = 3-dehydroshikimate + H2O</text>
        <dbReference type="Rhea" id="RHEA:21096"/>
        <dbReference type="ChEBI" id="CHEBI:15377"/>
        <dbReference type="ChEBI" id="CHEBI:16630"/>
        <dbReference type="ChEBI" id="CHEBI:32364"/>
        <dbReference type="EC" id="4.2.1.10"/>
    </reaction>
</comment>
<comment type="pathway">
    <text evidence="1">Metabolic intermediate biosynthesis; chorismate biosynthesis; chorismate from D-erythrose 4-phosphate and phosphoenolpyruvate: step 3/7.</text>
</comment>
<comment type="subunit">
    <text evidence="1">Homodimer.</text>
</comment>
<comment type="similarity">
    <text evidence="1">Belongs to the type-I 3-dehydroquinase family.</text>
</comment>
<accession>Q8ZW59</accession>
<organism>
    <name type="scientific">Pyrobaculum aerophilum (strain ATCC 51768 / DSM 7523 / JCM 9630 / CIP 104966 / NBRC 100827 / IM2)</name>
    <dbReference type="NCBI Taxonomy" id="178306"/>
    <lineage>
        <taxon>Archaea</taxon>
        <taxon>Thermoproteota</taxon>
        <taxon>Thermoprotei</taxon>
        <taxon>Thermoproteales</taxon>
        <taxon>Thermoproteaceae</taxon>
        <taxon>Pyrobaculum</taxon>
    </lineage>
</organism>
<dbReference type="EC" id="4.2.1.10" evidence="1"/>
<dbReference type="EMBL" id="AE009441">
    <property type="protein sequence ID" value="AAL63843.1"/>
    <property type="molecule type" value="Genomic_DNA"/>
</dbReference>
<dbReference type="RefSeq" id="WP_011008314.1">
    <property type="nucleotide sequence ID" value="NC_003364.1"/>
</dbReference>
<dbReference type="SMR" id="Q8ZW59"/>
<dbReference type="FunCoup" id="Q8ZW59">
    <property type="interactions" value="75"/>
</dbReference>
<dbReference type="STRING" id="178306.PAE1960"/>
<dbReference type="EnsemblBacteria" id="AAL63843">
    <property type="protein sequence ID" value="AAL63843"/>
    <property type="gene ID" value="PAE1960"/>
</dbReference>
<dbReference type="GeneID" id="1464166"/>
<dbReference type="KEGG" id="pai:PAE1960"/>
<dbReference type="PATRIC" id="fig|178306.9.peg.1447"/>
<dbReference type="eggNOG" id="arCOG02097">
    <property type="taxonomic scope" value="Archaea"/>
</dbReference>
<dbReference type="HOGENOM" id="CLU_955187_0_0_2"/>
<dbReference type="InParanoid" id="Q8ZW59"/>
<dbReference type="UniPathway" id="UPA00053">
    <property type="reaction ID" value="UER00086"/>
</dbReference>
<dbReference type="Proteomes" id="UP000002439">
    <property type="component" value="Chromosome"/>
</dbReference>
<dbReference type="GO" id="GO:0003855">
    <property type="term" value="F:3-dehydroquinate dehydratase activity"/>
    <property type="evidence" value="ECO:0000318"/>
    <property type="project" value="GO_Central"/>
</dbReference>
<dbReference type="GO" id="GO:0004106">
    <property type="term" value="F:chorismate mutase activity"/>
    <property type="evidence" value="ECO:0007669"/>
    <property type="project" value="InterPro"/>
</dbReference>
<dbReference type="GO" id="GO:0046279">
    <property type="term" value="P:3,4-dihydroxybenzoate biosynthetic process"/>
    <property type="evidence" value="ECO:0000318"/>
    <property type="project" value="GO_Central"/>
</dbReference>
<dbReference type="GO" id="GO:0008652">
    <property type="term" value="P:amino acid biosynthetic process"/>
    <property type="evidence" value="ECO:0007669"/>
    <property type="project" value="UniProtKB-KW"/>
</dbReference>
<dbReference type="GO" id="GO:0009073">
    <property type="term" value="P:aromatic amino acid family biosynthetic process"/>
    <property type="evidence" value="ECO:0007669"/>
    <property type="project" value="UniProtKB-KW"/>
</dbReference>
<dbReference type="GO" id="GO:0009423">
    <property type="term" value="P:chorismate biosynthetic process"/>
    <property type="evidence" value="ECO:0007669"/>
    <property type="project" value="UniProtKB-UniRule"/>
</dbReference>
<dbReference type="CDD" id="cd00502">
    <property type="entry name" value="DHQase_I"/>
    <property type="match status" value="1"/>
</dbReference>
<dbReference type="Gene3D" id="3.20.20.70">
    <property type="entry name" value="Aldolase class I"/>
    <property type="match status" value="1"/>
</dbReference>
<dbReference type="Gene3D" id="1.20.59.10">
    <property type="entry name" value="Chorismate mutase"/>
    <property type="match status" value="1"/>
</dbReference>
<dbReference type="HAMAP" id="MF_00214">
    <property type="entry name" value="AroD"/>
    <property type="match status" value="1"/>
</dbReference>
<dbReference type="InterPro" id="IPR013785">
    <property type="entry name" value="Aldolase_TIM"/>
</dbReference>
<dbReference type="InterPro" id="IPR036263">
    <property type="entry name" value="Chorismate_II_sf"/>
</dbReference>
<dbReference type="InterPro" id="IPR036979">
    <property type="entry name" value="CM_dom_sf"/>
</dbReference>
<dbReference type="InterPro" id="IPR002701">
    <property type="entry name" value="CM_II_prokaryot"/>
</dbReference>
<dbReference type="InterPro" id="IPR001381">
    <property type="entry name" value="DHquinase_I"/>
</dbReference>
<dbReference type="InterPro" id="IPR050146">
    <property type="entry name" value="Type-I_3-dehydroquinase"/>
</dbReference>
<dbReference type="PANTHER" id="PTHR43699">
    <property type="entry name" value="3-DEHYDROQUINATE DEHYDRATASE"/>
    <property type="match status" value="1"/>
</dbReference>
<dbReference type="PANTHER" id="PTHR43699:SF1">
    <property type="entry name" value="3-DEHYDROQUINATE DEHYDRATASE"/>
    <property type="match status" value="1"/>
</dbReference>
<dbReference type="Pfam" id="PF01817">
    <property type="entry name" value="CM_2"/>
    <property type="match status" value="1"/>
</dbReference>
<dbReference type="Pfam" id="PF01487">
    <property type="entry name" value="DHquinase_I"/>
    <property type="match status" value="1"/>
</dbReference>
<dbReference type="SMART" id="SM00830">
    <property type="entry name" value="CM_2"/>
    <property type="match status" value="1"/>
</dbReference>
<dbReference type="SUPFAM" id="SSF51569">
    <property type="entry name" value="Aldolase"/>
    <property type="match status" value="1"/>
</dbReference>
<dbReference type="SUPFAM" id="SSF48600">
    <property type="entry name" value="Chorismate mutase II"/>
    <property type="match status" value="1"/>
</dbReference>
<dbReference type="PROSITE" id="PS51168">
    <property type="entry name" value="CHORISMATE_MUT_2"/>
    <property type="match status" value="1"/>
</dbReference>
<proteinExistence type="inferred from homology"/>
<keyword id="KW-0028">Amino-acid biosynthesis</keyword>
<keyword id="KW-0057">Aromatic amino acid biosynthesis</keyword>
<keyword id="KW-0456">Lyase</keyword>
<keyword id="KW-1185">Reference proteome</keyword>
<keyword id="KW-0704">Schiff base</keyword>
<reference key="1">
    <citation type="journal article" date="2002" name="Proc. Natl. Acad. Sci. U.S.A.">
        <title>Genome sequence of the hyperthermophilic crenarchaeon Pyrobaculum aerophilum.</title>
        <authorList>
            <person name="Fitz-Gibbon S.T."/>
            <person name="Ladner H."/>
            <person name="Kim U.-J."/>
            <person name="Stetter K.O."/>
            <person name="Simon M.I."/>
            <person name="Miller J.H."/>
        </authorList>
    </citation>
    <scope>NUCLEOTIDE SEQUENCE [LARGE SCALE GENOMIC DNA]</scope>
    <source>
        <strain>ATCC 51768 / DSM 7523 / JCM 9630 / CIP 104966 / NBRC 100827 / IM2</strain>
    </source>
</reference>
<name>AROD_PYRAE</name>
<protein>
    <recommendedName>
        <fullName evidence="1">3-dehydroquinate dehydratase</fullName>
        <shortName evidence="1">3-dehydroquinase</shortName>
        <ecNumber evidence="1">4.2.1.10</ecNumber>
    </recommendedName>
    <alternativeName>
        <fullName evidence="1">Type I DHQase</fullName>
    </alternativeName>
    <alternativeName>
        <fullName evidence="1">Type I dehydroquinase</fullName>
        <shortName evidence="1">DHQ1</shortName>
    </alternativeName>
</protein>
<sequence>MLQYGVLICGVVPVRKPRDIEKALEAPVTCLELRLDYLEADLAEVRPLLEHAVARRVVIFTVRRREEGGQWRGDEEGREALYRKLLELNPHYIDVEAESPIIGEVAKIKGKAQLIASRHDFEKTPPLDVLSQWAKKAAAVGDLVKIVTYAKEPGDGLRVLSLIGAVEKPTVAFAMGPAGAYTRVAAAALGSPIMYVSLGEATAPGQLTADAYYAALLALGITPSGGGLPALREALDWVDGGLMYLLKKRLEVCRDMGRLKKDAGLPIYDDVREAQVLRRAGDFKQIFELVVQMCKAVQLVA</sequence>
<feature type="chain" id="PRO_0000138834" description="3-dehydroquinate dehydratase">
    <location>
        <begin position="1"/>
        <end position="301"/>
    </location>
</feature>
<feature type="domain" description="Chorismate mutase" evidence="2">
    <location>
        <begin position="222"/>
        <end position="301"/>
    </location>
</feature>
<feature type="region of interest" description="3-dehydroquinate dehydratase">
    <location>
        <begin position="1"/>
        <end position="221"/>
    </location>
</feature>
<feature type="active site" description="Proton donor/acceptor" evidence="1">
    <location>
        <position position="119"/>
    </location>
</feature>
<feature type="active site" description="Schiff-base intermediate with substrate" evidence="1">
    <location>
        <position position="145"/>
    </location>
</feature>
<feature type="binding site" evidence="1">
    <location>
        <begin position="32"/>
        <end position="34"/>
    </location>
    <ligand>
        <name>3-dehydroquinate</name>
        <dbReference type="ChEBI" id="CHEBI:32364"/>
    </ligand>
</feature>
<feature type="binding site" evidence="1">
    <location>
        <position position="63"/>
    </location>
    <ligand>
        <name>3-dehydroquinate</name>
        <dbReference type="ChEBI" id="CHEBI:32364"/>
    </ligand>
</feature>
<feature type="binding site" evidence="1">
    <location>
        <position position="183"/>
    </location>
    <ligand>
        <name>3-dehydroquinate</name>
        <dbReference type="ChEBI" id="CHEBI:32364"/>
    </ligand>
</feature>
<feature type="binding site" evidence="1">
    <location>
        <position position="202"/>
    </location>
    <ligand>
        <name>3-dehydroquinate</name>
        <dbReference type="ChEBI" id="CHEBI:32364"/>
    </ligand>
</feature>
<feature type="binding site" evidence="1">
    <location>
        <position position="206"/>
    </location>
    <ligand>
        <name>3-dehydroquinate</name>
        <dbReference type="ChEBI" id="CHEBI:32364"/>
    </ligand>
</feature>
<evidence type="ECO:0000255" key="1">
    <source>
        <dbReference type="HAMAP-Rule" id="MF_00214"/>
    </source>
</evidence>
<evidence type="ECO:0000255" key="2">
    <source>
        <dbReference type="PROSITE-ProRule" id="PRU00515"/>
    </source>
</evidence>
<gene>
    <name evidence="1" type="primary">aroD</name>
    <name type="ordered locus">PAE1960</name>
</gene>